<accession>A7ZKY9</accession>
<protein>
    <recommendedName>
        <fullName evidence="1">2-dehydro-3-deoxyphosphooctonate aldolase</fullName>
        <ecNumber evidence="1">2.5.1.55</ecNumber>
    </recommendedName>
    <alternativeName>
        <fullName evidence="1">3-deoxy-D-manno-octulosonic acid 8-phosphate synthase</fullName>
    </alternativeName>
    <alternativeName>
        <fullName evidence="1">KDO-8-phosphate synthase</fullName>
        <shortName evidence="1">KDO 8-P synthase</shortName>
        <shortName evidence="1">KDOPS</shortName>
    </alternativeName>
    <alternativeName>
        <fullName evidence="1">Phospho-2-dehydro-3-deoxyoctonate aldolase</fullName>
    </alternativeName>
</protein>
<dbReference type="EC" id="2.5.1.55" evidence="1"/>
<dbReference type="EMBL" id="CP000800">
    <property type="protein sequence ID" value="ABV19810.1"/>
    <property type="molecule type" value="Genomic_DNA"/>
</dbReference>
<dbReference type="RefSeq" id="WP_000811065.1">
    <property type="nucleotide sequence ID" value="NC_009801.1"/>
</dbReference>
<dbReference type="SMR" id="A7ZKY9"/>
<dbReference type="GeneID" id="75203328"/>
<dbReference type="KEGG" id="ecw:EcE24377A_1363"/>
<dbReference type="HOGENOM" id="CLU_036666_0_0_6"/>
<dbReference type="UniPathway" id="UPA00030"/>
<dbReference type="UniPathway" id="UPA00357">
    <property type="reaction ID" value="UER00474"/>
</dbReference>
<dbReference type="Proteomes" id="UP000001122">
    <property type="component" value="Chromosome"/>
</dbReference>
<dbReference type="GO" id="GO:0005737">
    <property type="term" value="C:cytoplasm"/>
    <property type="evidence" value="ECO:0007669"/>
    <property type="project" value="UniProtKB-SubCell"/>
</dbReference>
<dbReference type="GO" id="GO:0008676">
    <property type="term" value="F:3-deoxy-8-phosphooctulonate synthase activity"/>
    <property type="evidence" value="ECO:0007669"/>
    <property type="project" value="UniProtKB-UniRule"/>
</dbReference>
<dbReference type="GO" id="GO:0019294">
    <property type="term" value="P:keto-3-deoxy-D-manno-octulosonic acid biosynthetic process"/>
    <property type="evidence" value="ECO:0007669"/>
    <property type="project" value="UniProtKB-UniRule"/>
</dbReference>
<dbReference type="FunFam" id="3.20.20.70:FF:000058">
    <property type="entry name" value="2-dehydro-3-deoxyphosphooctonate aldolase"/>
    <property type="match status" value="1"/>
</dbReference>
<dbReference type="Gene3D" id="3.20.20.70">
    <property type="entry name" value="Aldolase class I"/>
    <property type="match status" value="1"/>
</dbReference>
<dbReference type="HAMAP" id="MF_00056">
    <property type="entry name" value="KDO8P_synth"/>
    <property type="match status" value="1"/>
</dbReference>
<dbReference type="InterPro" id="IPR013785">
    <property type="entry name" value="Aldolase_TIM"/>
</dbReference>
<dbReference type="InterPro" id="IPR006218">
    <property type="entry name" value="DAHP1/KDSA"/>
</dbReference>
<dbReference type="InterPro" id="IPR006269">
    <property type="entry name" value="KDO8P_synthase"/>
</dbReference>
<dbReference type="NCBIfam" id="TIGR01362">
    <property type="entry name" value="KDO8P_synth"/>
    <property type="match status" value="1"/>
</dbReference>
<dbReference type="NCBIfam" id="NF003543">
    <property type="entry name" value="PRK05198.1"/>
    <property type="match status" value="1"/>
</dbReference>
<dbReference type="NCBIfam" id="NF009109">
    <property type="entry name" value="PRK12457.1"/>
    <property type="match status" value="1"/>
</dbReference>
<dbReference type="PANTHER" id="PTHR21057">
    <property type="entry name" value="PHOSPHO-2-DEHYDRO-3-DEOXYHEPTONATE ALDOLASE"/>
    <property type="match status" value="1"/>
</dbReference>
<dbReference type="Pfam" id="PF00793">
    <property type="entry name" value="DAHP_synth_1"/>
    <property type="match status" value="1"/>
</dbReference>
<dbReference type="SUPFAM" id="SSF51569">
    <property type="entry name" value="Aldolase"/>
    <property type="match status" value="1"/>
</dbReference>
<proteinExistence type="inferred from homology"/>
<gene>
    <name evidence="1" type="primary">kdsA</name>
    <name type="ordered locus">EcE24377A_1363</name>
</gene>
<comment type="catalytic activity">
    <reaction evidence="1">
        <text>D-arabinose 5-phosphate + phosphoenolpyruvate + H2O = 3-deoxy-alpha-D-manno-2-octulosonate-8-phosphate + phosphate</text>
        <dbReference type="Rhea" id="RHEA:14053"/>
        <dbReference type="ChEBI" id="CHEBI:15377"/>
        <dbReference type="ChEBI" id="CHEBI:43474"/>
        <dbReference type="ChEBI" id="CHEBI:57693"/>
        <dbReference type="ChEBI" id="CHEBI:58702"/>
        <dbReference type="ChEBI" id="CHEBI:85985"/>
        <dbReference type="EC" id="2.5.1.55"/>
    </reaction>
</comment>
<comment type="pathway">
    <text evidence="1">Carbohydrate biosynthesis; 3-deoxy-D-manno-octulosonate biosynthesis; 3-deoxy-D-manno-octulosonate from D-ribulose 5-phosphate: step 2/3.</text>
</comment>
<comment type="pathway">
    <text evidence="1">Bacterial outer membrane biogenesis; lipopolysaccharide biosynthesis.</text>
</comment>
<comment type="subcellular location">
    <subcellularLocation>
        <location evidence="1">Cytoplasm</location>
    </subcellularLocation>
</comment>
<comment type="similarity">
    <text evidence="1">Belongs to the KdsA family.</text>
</comment>
<organism>
    <name type="scientific">Escherichia coli O139:H28 (strain E24377A / ETEC)</name>
    <dbReference type="NCBI Taxonomy" id="331111"/>
    <lineage>
        <taxon>Bacteria</taxon>
        <taxon>Pseudomonadati</taxon>
        <taxon>Pseudomonadota</taxon>
        <taxon>Gammaproteobacteria</taxon>
        <taxon>Enterobacterales</taxon>
        <taxon>Enterobacteriaceae</taxon>
        <taxon>Escherichia</taxon>
    </lineage>
</organism>
<reference key="1">
    <citation type="journal article" date="2008" name="J. Bacteriol.">
        <title>The pangenome structure of Escherichia coli: comparative genomic analysis of E. coli commensal and pathogenic isolates.</title>
        <authorList>
            <person name="Rasko D.A."/>
            <person name="Rosovitz M.J."/>
            <person name="Myers G.S.A."/>
            <person name="Mongodin E.F."/>
            <person name="Fricke W.F."/>
            <person name="Gajer P."/>
            <person name="Crabtree J."/>
            <person name="Sebaihia M."/>
            <person name="Thomson N.R."/>
            <person name="Chaudhuri R."/>
            <person name="Henderson I.R."/>
            <person name="Sperandio V."/>
            <person name="Ravel J."/>
        </authorList>
    </citation>
    <scope>NUCLEOTIDE SEQUENCE [LARGE SCALE GENOMIC DNA]</scope>
    <source>
        <strain>E24377A / ETEC</strain>
    </source>
</reference>
<evidence type="ECO:0000255" key="1">
    <source>
        <dbReference type="HAMAP-Rule" id="MF_00056"/>
    </source>
</evidence>
<feature type="chain" id="PRO_1000057393" description="2-dehydro-3-deoxyphosphooctonate aldolase">
    <location>
        <begin position="1"/>
        <end position="284"/>
    </location>
</feature>
<keyword id="KW-0963">Cytoplasm</keyword>
<keyword id="KW-0448">Lipopolysaccharide biosynthesis</keyword>
<keyword id="KW-1185">Reference proteome</keyword>
<keyword id="KW-0808">Transferase</keyword>
<sequence>MKQKVVSIGDINVANDLPFVLFGGMNVLESRDLAMRICEHYVTVTQKLGIPYVFKASFDKANRSSIHSYRGPGLEEGMKIFQELKQTFGVKIITDVHEPSQAQPVADVVDVIQLPAFLARQTDLVEAMAKTGAVINVKKPQFVSPGQMGNIVDKFKEGGNEKVILCDRGANFGYDNLVVDMLGFSIMKKVSGNSPVIFDVTHALQCRDPFGAASGGRRAQVAELARAGMAVGLAGLFIEAHPDPEHAKCDGPSALPLAKLEPFLKQMKAIDDLVKGFEELDTSK</sequence>
<name>KDSA_ECO24</name>